<evidence type="ECO:0000250" key="1"/>
<evidence type="ECO:0000250" key="2">
    <source>
        <dbReference type="UniProtKB" id="Q9NNX6"/>
    </source>
</evidence>
<evidence type="ECO:0000255" key="3"/>
<evidence type="ECO:0000255" key="4">
    <source>
        <dbReference type="PROSITE-ProRule" id="PRU00040"/>
    </source>
</evidence>
<evidence type="ECO:0000256" key="5">
    <source>
        <dbReference type="SAM" id="MobiDB-lite"/>
    </source>
</evidence>
<feature type="chain" id="PRO_0000046602" description="CD209 antigen">
    <location>
        <begin position="1"/>
        <end position="358"/>
    </location>
</feature>
<feature type="topological domain" description="Cytoplasmic" evidence="3">
    <location>
        <begin position="1"/>
        <end position="37"/>
    </location>
</feature>
<feature type="transmembrane region" description="Helical; Signal-anchor for type II membrane protein" evidence="3">
    <location>
        <begin position="38"/>
        <end position="58"/>
    </location>
</feature>
<feature type="topological domain" description="Extracellular" evidence="3">
    <location>
        <begin position="59"/>
        <end position="358"/>
    </location>
</feature>
<feature type="repeat" description="1">
    <location>
        <begin position="96"/>
        <end position="118"/>
    </location>
</feature>
<feature type="repeat" description="2">
    <location>
        <begin position="119"/>
        <end position="141"/>
    </location>
</feature>
<feature type="repeat" description="3">
    <location>
        <begin position="142"/>
        <end position="164"/>
    </location>
</feature>
<feature type="repeat" description="4">
    <location>
        <begin position="165"/>
        <end position="187"/>
    </location>
</feature>
<feature type="repeat" description="5">
    <location>
        <begin position="188"/>
        <end position="211"/>
    </location>
</feature>
<feature type="domain" description="C-type lectin" evidence="4">
    <location>
        <begin position="217"/>
        <end position="332"/>
    </location>
</feature>
<feature type="region of interest" description="5 X approximate tandem repeats">
    <location>
        <begin position="96"/>
        <end position="280"/>
    </location>
</feature>
<feature type="region of interest" description="Disordered" evidence="5">
    <location>
        <begin position="336"/>
        <end position="358"/>
    </location>
</feature>
<feature type="short sequence motif" description="Endocytosis signal" evidence="1">
    <location>
        <begin position="14"/>
        <end position="15"/>
    </location>
</feature>
<feature type="short sequence motif" description="Endocytosis signal" evidence="3">
    <location>
        <begin position="16"/>
        <end position="18"/>
    </location>
</feature>
<feature type="short sequence motif" description="Endocytosis signal" evidence="3">
    <location>
        <begin position="31"/>
        <end position="34"/>
    </location>
</feature>
<feature type="binding site" evidence="1">
    <location>
        <position position="301"/>
    </location>
    <ligand>
        <name>Ca(2+)</name>
        <dbReference type="ChEBI" id="CHEBI:29108"/>
    </ligand>
</feature>
<feature type="binding site" evidence="1">
    <location>
        <position position="303"/>
    </location>
    <ligand>
        <name>Ca(2+)</name>
        <dbReference type="ChEBI" id="CHEBI:29108"/>
    </ligand>
</feature>
<feature type="binding site" evidence="1">
    <location>
        <position position="305"/>
    </location>
    <ligand>
        <name>Ca(2+)</name>
        <dbReference type="ChEBI" id="CHEBI:29108"/>
    </ligand>
</feature>
<feature type="binding site" evidence="1">
    <location>
        <position position="308"/>
    </location>
    <ligand>
        <name>Ca(2+)</name>
        <dbReference type="ChEBI" id="CHEBI:29108"/>
    </ligand>
</feature>
<feature type="binding site" evidence="1">
    <location>
        <position position="319"/>
    </location>
    <ligand>
        <name>Ca(2+)</name>
        <dbReference type="ChEBI" id="CHEBI:29108"/>
    </ligand>
</feature>
<feature type="binding site" evidence="1">
    <location>
        <position position="320"/>
    </location>
    <ligand>
        <name>Ca(2+)</name>
        <dbReference type="ChEBI" id="CHEBI:29108"/>
    </ligand>
</feature>
<feature type="glycosylation site" description="N-linked (GlcNAc...) asparagine" evidence="3">
    <location>
        <position position="80"/>
    </location>
</feature>
<feature type="disulfide bond" evidence="4">
    <location>
        <begin position="210"/>
        <end position="221"/>
    </location>
</feature>
<feature type="disulfide bond" evidence="4">
    <location>
        <begin position="238"/>
        <end position="331"/>
    </location>
</feature>
<feature type="disulfide bond" evidence="4">
    <location>
        <begin position="310"/>
        <end position="323"/>
    </location>
</feature>
<dbReference type="EMBL" id="AY078870">
    <property type="protein sequence ID" value="AAL89537.1"/>
    <property type="molecule type" value="Genomic_DNA"/>
</dbReference>
<dbReference type="EMBL" id="AY078864">
    <property type="protein sequence ID" value="AAL89537.1"/>
    <property type="status" value="JOINED"/>
    <property type="molecule type" value="Genomic_DNA"/>
</dbReference>
<dbReference type="EMBL" id="AY078865">
    <property type="protein sequence ID" value="AAL89537.1"/>
    <property type="status" value="JOINED"/>
    <property type="molecule type" value="Genomic_DNA"/>
</dbReference>
<dbReference type="EMBL" id="AY078866">
    <property type="protein sequence ID" value="AAL89537.1"/>
    <property type="status" value="JOINED"/>
    <property type="molecule type" value="Genomic_DNA"/>
</dbReference>
<dbReference type="EMBL" id="AY078867">
    <property type="protein sequence ID" value="AAL89537.1"/>
    <property type="status" value="JOINED"/>
    <property type="molecule type" value="Genomic_DNA"/>
</dbReference>
<dbReference type="EMBL" id="AY078868">
    <property type="protein sequence ID" value="AAL89537.1"/>
    <property type="status" value="JOINED"/>
    <property type="molecule type" value="Genomic_DNA"/>
</dbReference>
<dbReference type="EMBL" id="AY078869">
    <property type="protein sequence ID" value="AAL89537.1"/>
    <property type="status" value="JOINED"/>
    <property type="molecule type" value="Genomic_DNA"/>
</dbReference>
<dbReference type="SMR" id="Q8HY04"/>
<dbReference type="GlyCosmos" id="Q8HY04">
    <property type="glycosylation" value="1 site, No reported glycans"/>
</dbReference>
<dbReference type="GO" id="GO:0016020">
    <property type="term" value="C:membrane"/>
    <property type="evidence" value="ECO:0007669"/>
    <property type="project" value="UniProtKB-SubCell"/>
</dbReference>
<dbReference type="GO" id="GO:0005537">
    <property type="term" value="F:D-mannose binding"/>
    <property type="evidence" value="ECO:0007669"/>
    <property type="project" value="UniProtKB-KW"/>
</dbReference>
<dbReference type="GO" id="GO:0046872">
    <property type="term" value="F:metal ion binding"/>
    <property type="evidence" value="ECO:0007669"/>
    <property type="project" value="UniProtKB-KW"/>
</dbReference>
<dbReference type="GO" id="GO:0002250">
    <property type="term" value="P:adaptive immune response"/>
    <property type="evidence" value="ECO:0007669"/>
    <property type="project" value="UniProtKB-KW"/>
</dbReference>
<dbReference type="GO" id="GO:0007155">
    <property type="term" value="P:cell adhesion"/>
    <property type="evidence" value="ECO:0007669"/>
    <property type="project" value="UniProtKB-KW"/>
</dbReference>
<dbReference type="GO" id="GO:0006897">
    <property type="term" value="P:endocytosis"/>
    <property type="evidence" value="ECO:0007669"/>
    <property type="project" value="UniProtKB-KW"/>
</dbReference>
<dbReference type="GO" id="GO:0045087">
    <property type="term" value="P:innate immune response"/>
    <property type="evidence" value="ECO:0007669"/>
    <property type="project" value="UniProtKB-KW"/>
</dbReference>
<dbReference type="CDD" id="cd03590">
    <property type="entry name" value="CLECT_DC-SIGN_like"/>
    <property type="match status" value="1"/>
</dbReference>
<dbReference type="FunFam" id="3.10.100.10:FF:000044">
    <property type="entry name" value="CD209 antigen, isoform CRA_b"/>
    <property type="match status" value="1"/>
</dbReference>
<dbReference type="Gene3D" id="3.10.100.10">
    <property type="entry name" value="Mannose-Binding Protein A, subunit A"/>
    <property type="match status" value="1"/>
</dbReference>
<dbReference type="InterPro" id="IPR001304">
    <property type="entry name" value="C-type_lectin-like"/>
</dbReference>
<dbReference type="InterPro" id="IPR016186">
    <property type="entry name" value="C-type_lectin-like/link_sf"/>
</dbReference>
<dbReference type="InterPro" id="IPR050111">
    <property type="entry name" value="C-type_lectin/snaclec_domain"/>
</dbReference>
<dbReference type="InterPro" id="IPR018378">
    <property type="entry name" value="C-type_lectin_CS"/>
</dbReference>
<dbReference type="InterPro" id="IPR033989">
    <property type="entry name" value="CD209-like_CTLD"/>
</dbReference>
<dbReference type="InterPro" id="IPR016187">
    <property type="entry name" value="CTDL_fold"/>
</dbReference>
<dbReference type="PANTHER" id="PTHR22803">
    <property type="entry name" value="MANNOSE, PHOSPHOLIPASE, LECTIN RECEPTOR RELATED"/>
    <property type="match status" value="1"/>
</dbReference>
<dbReference type="Pfam" id="PF00059">
    <property type="entry name" value="Lectin_C"/>
    <property type="match status" value="1"/>
</dbReference>
<dbReference type="SMART" id="SM00034">
    <property type="entry name" value="CLECT"/>
    <property type="match status" value="1"/>
</dbReference>
<dbReference type="SUPFAM" id="SSF56436">
    <property type="entry name" value="C-type lectin-like"/>
    <property type="match status" value="1"/>
</dbReference>
<dbReference type="PROSITE" id="PS00615">
    <property type="entry name" value="C_TYPE_LECTIN_1"/>
    <property type="match status" value="1"/>
</dbReference>
<dbReference type="PROSITE" id="PS50041">
    <property type="entry name" value="C_TYPE_LECTIN_2"/>
    <property type="match status" value="1"/>
</dbReference>
<accession>Q8HY04</accession>
<gene>
    <name type="primary">CD209</name>
</gene>
<proteinExistence type="inferred from homology"/>
<protein>
    <recommendedName>
        <fullName>CD209 antigen</fullName>
    </recommendedName>
    <alternativeName>
        <fullName>Dendritic cell-specific ICAM-3-grabbing non-integrin 1</fullName>
        <shortName>DC-SIGN1</shortName>
    </alternativeName>
    <cdAntigenName>CD209</cdAntigenName>
</protein>
<name>CD209_PAPHA</name>
<keyword id="KW-1064">Adaptive immunity</keyword>
<keyword id="KW-0106">Calcium</keyword>
<keyword id="KW-0130">Cell adhesion</keyword>
<keyword id="KW-1015">Disulfide bond</keyword>
<keyword id="KW-0254">Endocytosis</keyword>
<keyword id="KW-0325">Glycoprotein</keyword>
<keyword id="KW-0391">Immunity</keyword>
<keyword id="KW-0399">Innate immunity</keyword>
<keyword id="KW-0430">Lectin</keyword>
<keyword id="KW-0465">Mannose-binding</keyword>
<keyword id="KW-0472">Membrane</keyword>
<keyword id="KW-0479">Metal-binding</keyword>
<keyword id="KW-0675">Receptor</keyword>
<keyword id="KW-0677">Repeat</keyword>
<keyword id="KW-0735">Signal-anchor</keyword>
<keyword id="KW-0812">Transmembrane</keyword>
<keyword id="KW-1133">Transmembrane helix</keyword>
<organism>
    <name type="scientific">Papio hamadryas</name>
    <name type="common">Hamadryas baboon</name>
    <dbReference type="NCBI Taxonomy" id="9557"/>
    <lineage>
        <taxon>Eukaryota</taxon>
        <taxon>Metazoa</taxon>
        <taxon>Chordata</taxon>
        <taxon>Craniata</taxon>
        <taxon>Vertebrata</taxon>
        <taxon>Euteleostomi</taxon>
        <taxon>Mammalia</taxon>
        <taxon>Eutheria</taxon>
        <taxon>Euarchontoglires</taxon>
        <taxon>Primates</taxon>
        <taxon>Haplorrhini</taxon>
        <taxon>Catarrhini</taxon>
        <taxon>Cercopithecidae</taxon>
        <taxon>Cercopithecinae</taxon>
        <taxon>Papio</taxon>
    </lineage>
</organism>
<sequence>MSDSKEPRLQQLGLLEEEQLRGVGFRQTRGYKSLAGCLGHGPLVLQLLSFTLLAGLLVQVSKVPSSLSQGQSKQDAIYQNLTQLKAAVSELSEKSKLQEIYQELTRLKAAVGELPEKSKLQEIYQELTRLKAAVGELPEKSKQQEIYQELTQLKAAVDGLPDRSKQQEIYQELTQLKAAVDGLPDRSKQQEIYQELIQLKAAVERLCRPCPWEWTFFQGNCYFMSNSQRNWHNSITACQEVGAQLVVIKSAEEQNFLQLQSSRSNRFTWMGLSDLNHEGTWQWVDGSPLLPSFKQYWNKGEPNNIGEEDCAEFSGNGWNDDKCNLAKFWICKKSAASCSGDEERLLSPAPTTPNPPPE</sequence>
<reference key="1">
    <citation type="journal article" date="2003" name="J. Virol.">
        <title>Novel member of the CD209 (DC-SIGN) gene family in primates.</title>
        <authorList>
            <person name="Bashirova A.A."/>
            <person name="Wu L."/>
            <person name="Cheng J."/>
            <person name="Martin T.D."/>
            <person name="Martin M.P."/>
            <person name="Benveniste R.E."/>
            <person name="Lifson J.D."/>
            <person name="Kewalramani V.N."/>
            <person name="Hughes A."/>
            <person name="Carrington M."/>
        </authorList>
    </citation>
    <scope>NUCLEOTIDE SEQUENCE [GENOMIC DNA]</scope>
    <source>
        <strain>Isolate B854</strain>
    </source>
</reference>
<comment type="function">
    <text evidence="1">Pathogen-recognition receptor expressed on the surface of immature dendritic cells (DCs) and involved in initiation of primary immune response. Thought to mediate the endocytosis of pathogens which are subsequently degraded in lysosomal compartments. The receptor returns to the cell membrane surface and the pathogen-derived antigens are presented to resting T-cells via MHC class II proteins to initiate the adaptive immune response. Probably recognizes in a calcium-dependent manner high mannose N-linked oligosaccharides in a variety of pathogen antigens (By similarity).</text>
</comment>
<comment type="function">
    <text evidence="1">On DCs it is a high affinity receptor for ICAM2 and ICAM3 by binding to mannose-like carbohydrates. May act as a DC rolling receptor that mediates transendothelial migration of DC presursors from blood to tissues by binding endothelial ICAM2. Seems to regulate DC-induced T-cell proliferation by binding to ICAM3 on T-cells in the immunological synapse formed between DC and T-cells (By similarity).</text>
</comment>
<comment type="subunit">
    <text evidence="2">Homotetramer. Interacts with C1QBP; the interaction is indicative for a C1q:C1QBP:CD209 signaling complex. Interacts with ICAM2 and ICAM3 by binding to mannose-like carbohydrates. Interacts (via C-type lectin domain) with CEACAM1 (via Lewis X moieties); this interaction is regulated by the glycosylation pattern of CEACAM1 on cell types and regulates contact between dendritic cells and neutrophils.</text>
</comment>
<comment type="subcellular location">
    <subcellularLocation>
        <location evidence="1">Membrane</location>
        <topology evidence="1">Single-pass type II membrane protein</topology>
    </subcellularLocation>
</comment>
<comment type="domain">
    <text evidence="1">The tandem repeat domain, also called neck domain, mediates oligomerization.</text>
</comment>